<keyword id="KW-0131">Cell cycle</keyword>
<keyword id="KW-0132">Cell division</keyword>
<keyword id="KW-0143">Chaperone</keyword>
<keyword id="KW-0963">Cytoplasm</keyword>
<keyword id="KW-0413">Isomerase</keyword>
<keyword id="KW-0697">Rotamase</keyword>
<reference key="1">
    <citation type="submission" date="2008-01" db="EMBL/GenBank/DDBJ databases">
        <title>Complete sequence of Shewanella halifaxensis HAW-EB4.</title>
        <authorList>
            <consortium name="US DOE Joint Genome Institute"/>
            <person name="Copeland A."/>
            <person name="Lucas S."/>
            <person name="Lapidus A."/>
            <person name="Glavina del Rio T."/>
            <person name="Dalin E."/>
            <person name="Tice H."/>
            <person name="Bruce D."/>
            <person name="Goodwin L."/>
            <person name="Pitluck S."/>
            <person name="Sims D."/>
            <person name="Brettin T."/>
            <person name="Detter J.C."/>
            <person name="Han C."/>
            <person name="Kuske C.R."/>
            <person name="Schmutz J."/>
            <person name="Larimer F."/>
            <person name="Land M."/>
            <person name="Hauser L."/>
            <person name="Kyrpides N."/>
            <person name="Kim E."/>
            <person name="Zhao J.-S."/>
            <person name="Richardson P."/>
        </authorList>
    </citation>
    <scope>NUCLEOTIDE SEQUENCE [LARGE SCALE GENOMIC DNA]</scope>
    <source>
        <strain>HAW-EB4</strain>
    </source>
</reference>
<dbReference type="EC" id="5.2.1.8" evidence="1"/>
<dbReference type="EMBL" id="CP000931">
    <property type="protein sequence ID" value="ABZ77322.1"/>
    <property type="molecule type" value="Genomic_DNA"/>
</dbReference>
<dbReference type="RefSeq" id="WP_012277850.1">
    <property type="nucleotide sequence ID" value="NC_010334.1"/>
</dbReference>
<dbReference type="SMR" id="B0TLV0"/>
<dbReference type="STRING" id="458817.Shal_2769"/>
<dbReference type="KEGG" id="shl:Shal_2769"/>
<dbReference type="eggNOG" id="COG0544">
    <property type="taxonomic scope" value="Bacteria"/>
</dbReference>
<dbReference type="HOGENOM" id="CLU_033058_2_0_6"/>
<dbReference type="OrthoDB" id="9767721at2"/>
<dbReference type="Proteomes" id="UP000001317">
    <property type="component" value="Chromosome"/>
</dbReference>
<dbReference type="GO" id="GO:0005737">
    <property type="term" value="C:cytoplasm"/>
    <property type="evidence" value="ECO:0007669"/>
    <property type="project" value="UniProtKB-SubCell"/>
</dbReference>
<dbReference type="GO" id="GO:0003755">
    <property type="term" value="F:peptidyl-prolyl cis-trans isomerase activity"/>
    <property type="evidence" value="ECO:0007669"/>
    <property type="project" value="UniProtKB-UniRule"/>
</dbReference>
<dbReference type="GO" id="GO:0044183">
    <property type="term" value="F:protein folding chaperone"/>
    <property type="evidence" value="ECO:0007669"/>
    <property type="project" value="TreeGrafter"/>
</dbReference>
<dbReference type="GO" id="GO:0043022">
    <property type="term" value="F:ribosome binding"/>
    <property type="evidence" value="ECO:0007669"/>
    <property type="project" value="TreeGrafter"/>
</dbReference>
<dbReference type="GO" id="GO:0051083">
    <property type="term" value="P:'de novo' cotranslational protein folding"/>
    <property type="evidence" value="ECO:0007669"/>
    <property type="project" value="TreeGrafter"/>
</dbReference>
<dbReference type="GO" id="GO:0051301">
    <property type="term" value="P:cell division"/>
    <property type="evidence" value="ECO:0007669"/>
    <property type="project" value="UniProtKB-KW"/>
</dbReference>
<dbReference type="GO" id="GO:0061077">
    <property type="term" value="P:chaperone-mediated protein folding"/>
    <property type="evidence" value="ECO:0007669"/>
    <property type="project" value="TreeGrafter"/>
</dbReference>
<dbReference type="GO" id="GO:0015031">
    <property type="term" value="P:protein transport"/>
    <property type="evidence" value="ECO:0007669"/>
    <property type="project" value="UniProtKB-UniRule"/>
</dbReference>
<dbReference type="GO" id="GO:0043335">
    <property type="term" value="P:protein unfolding"/>
    <property type="evidence" value="ECO:0007669"/>
    <property type="project" value="TreeGrafter"/>
</dbReference>
<dbReference type="FunFam" id="3.10.50.40:FF:000001">
    <property type="entry name" value="Trigger factor"/>
    <property type="match status" value="1"/>
</dbReference>
<dbReference type="Gene3D" id="3.10.50.40">
    <property type="match status" value="1"/>
</dbReference>
<dbReference type="Gene3D" id="3.30.70.1050">
    <property type="entry name" value="Trigger factor ribosome-binding domain"/>
    <property type="match status" value="1"/>
</dbReference>
<dbReference type="Gene3D" id="1.10.3120.10">
    <property type="entry name" value="Trigger factor, C-terminal domain"/>
    <property type="match status" value="1"/>
</dbReference>
<dbReference type="HAMAP" id="MF_00303">
    <property type="entry name" value="Trigger_factor_Tig"/>
    <property type="match status" value="1"/>
</dbReference>
<dbReference type="InterPro" id="IPR046357">
    <property type="entry name" value="PPIase_dom_sf"/>
</dbReference>
<dbReference type="InterPro" id="IPR001179">
    <property type="entry name" value="PPIase_FKBP_dom"/>
</dbReference>
<dbReference type="InterPro" id="IPR005215">
    <property type="entry name" value="Trig_fac"/>
</dbReference>
<dbReference type="InterPro" id="IPR008880">
    <property type="entry name" value="Trigger_fac_C"/>
</dbReference>
<dbReference type="InterPro" id="IPR037041">
    <property type="entry name" value="Trigger_fac_C_sf"/>
</dbReference>
<dbReference type="InterPro" id="IPR008881">
    <property type="entry name" value="Trigger_fac_ribosome-bd_bac"/>
</dbReference>
<dbReference type="InterPro" id="IPR036611">
    <property type="entry name" value="Trigger_fac_ribosome-bd_sf"/>
</dbReference>
<dbReference type="InterPro" id="IPR027304">
    <property type="entry name" value="Trigger_fact/SurA_dom_sf"/>
</dbReference>
<dbReference type="NCBIfam" id="TIGR00115">
    <property type="entry name" value="tig"/>
    <property type="match status" value="1"/>
</dbReference>
<dbReference type="PANTHER" id="PTHR30560">
    <property type="entry name" value="TRIGGER FACTOR CHAPERONE AND PEPTIDYL-PROLYL CIS/TRANS ISOMERASE"/>
    <property type="match status" value="1"/>
</dbReference>
<dbReference type="PANTHER" id="PTHR30560:SF3">
    <property type="entry name" value="TRIGGER FACTOR-LIKE PROTEIN TIG, CHLOROPLASTIC"/>
    <property type="match status" value="1"/>
</dbReference>
<dbReference type="Pfam" id="PF00254">
    <property type="entry name" value="FKBP_C"/>
    <property type="match status" value="1"/>
</dbReference>
<dbReference type="Pfam" id="PF05698">
    <property type="entry name" value="Trigger_C"/>
    <property type="match status" value="1"/>
</dbReference>
<dbReference type="Pfam" id="PF05697">
    <property type="entry name" value="Trigger_N"/>
    <property type="match status" value="1"/>
</dbReference>
<dbReference type="PIRSF" id="PIRSF003095">
    <property type="entry name" value="Trigger_factor"/>
    <property type="match status" value="1"/>
</dbReference>
<dbReference type="SUPFAM" id="SSF54534">
    <property type="entry name" value="FKBP-like"/>
    <property type="match status" value="1"/>
</dbReference>
<dbReference type="SUPFAM" id="SSF109998">
    <property type="entry name" value="Triger factor/SurA peptide-binding domain-like"/>
    <property type="match status" value="1"/>
</dbReference>
<dbReference type="SUPFAM" id="SSF102735">
    <property type="entry name" value="Trigger factor ribosome-binding domain"/>
    <property type="match status" value="1"/>
</dbReference>
<dbReference type="PROSITE" id="PS50059">
    <property type="entry name" value="FKBP_PPIASE"/>
    <property type="match status" value="1"/>
</dbReference>
<protein>
    <recommendedName>
        <fullName evidence="1">Trigger factor</fullName>
        <shortName evidence="1">TF</shortName>
        <ecNumber evidence="1">5.2.1.8</ecNumber>
    </recommendedName>
    <alternativeName>
        <fullName evidence="1">PPIase</fullName>
    </alternativeName>
</protein>
<gene>
    <name evidence="1" type="primary">tig</name>
    <name type="ordered locus">Shal_2769</name>
</gene>
<organism>
    <name type="scientific">Shewanella halifaxensis (strain HAW-EB4)</name>
    <dbReference type="NCBI Taxonomy" id="458817"/>
    <lineage>
        <taxon>Bacteria</taxon>
        <taxon>Pseudomonadati</taxon>
        <taxon>Pseudomonadota</taxon>
        <taxon>Gammaproteobacteria</taxon>
        <taxon>Alteromonadales</taxon>
        <taxon>Shewanellaceae</taxon>
        <taxon>Shewanella</taxon>
    </lineage>
</organism>
<accession>B0TLV0</accession>
<evidence type="ECO:0000255" key="1">
    <source>
        <dbReference type="HAMAP-Rule" id="MF_00303"/>
    </source>
</evidence>
<feature type="chain" id="PRO_1000079057" description="Trigger factor">
    <location>
        <begin position="1"/>
        <end position="434"/>
    </location>
</feature>
<feature type="domain" description="PPIase FKBP-type" evidence="1">
    <location>
        <begin position="160"/>
        <end position="245"/>
    </location>
</feature>
<name>TIG_SHEHH</name>
<comment type="function">
    <text evidence="1">Involved in protein export. Acts as a chaperone by maintaining the newly synthesized protein in an open conformation. Functions as a peptidyl-prolyl cis-trans isomerase.</text>
</comment>
<comment type="catalytic activity">
    <reaction evidence="1">
        <text>[protein]-peptidylproline (omega=180) = [protein]-peptidylproline (omega=0)</text>
        <dbReference type="Rhea" id="RHEA:16237"/>
        <dbReference type="Rhea" id="RHEA-COMP:10747"/>
        <dbReference type="Rhea" id="RHEA-COMP:10748"/>
        <dbReference type="ChEBI" id="CHEBI:83833"/>
        <dbReference type="ChEBI" id="CHEBI:83834"/>
        <dbReference type="EC" id="5.2.1.8"/>
    </reaction>
</comment>
<comment type="subcellular location">
    <subcellularLocation>
        <location>Cytoplasm</location>
    </subcellularLocation>
    <text evidence="1">About half TF is bound to the ribosome near the polypeptide exit tunnel while the other half is free in the cytoplasm.</text>
</comment>
<comment type="domain">
    <text evidence="1">Consists of 3 domains; the N-terminus binds the ribosome, the middle domain has PPIase activity, while the C-terminus has intrinsic chaperone activity on its own.</text>
</comment>
<comment type="similarity">
    <text evidence="1">Belongs to the FKBP-type PPIase family. Tig subfamily.</text>
</comment>
<sequence>MQVSVETTQGLERRLTISVPAEQIENTVKEALKSEAKRARIPGFRPGKVPVSVINKRYGNAIRQDITGEVMQRNFIEAIIAEKLNPAGAPTFTPGSTEGENFEFVATFEIYPEVELKGLESITVEQPTAEVTEADVDSMIETLRNQHATFEVAERAAAEGDKAKINFVGSIDGEEFEGGKADDFELQLGSGRMIPGFESGVEGHKAGEEFNIEVTFPEDYHAENLKGKVATFAITLNEVQAANLPEVNDEFATLFGITEGGIDALRGEISKNMSRELEQALKANVKEQVLNGLVEQNDIELPAALIDGEVEVLRKQAMQRFGDQAANMPELPADLFTEQAARRVKVGLLLGEVIKANELKAEDERVQALIASMASAYEDPSEVVAYYNGNEELMQNMRNVALEEQAVEALLKTATLTEKAVNFEEFMNKATGRA</sequence>
<proteinExistence type="inferred from homology"/>